<evidence type="ECO:0000255" key="1">
    <source>
        <dbReference type="HAMAP-Rule" id="MF_00332"/>
    </source>
</evidence>
<evidence type="ECO:0000256" key="2">
    <source>
        <dbReference type="SAM" id="MobiDB-lite"/>
    </source>
</evidence>
<feature type="chain" id="PRO_0000225932" description="Chaperone protein DnaK">
    <location>
        <begin position="1"/>
        <end position="611"/>
    </location>
</feature>
<feature type="region of interest" description="Disordered" evidence="2">
    <location>
        <begin position="577"/>
        <end position="598"/>
    </location>
</feature>
<feature type="compositionally biased region" description="Low complexity" evidence="2">
    <location>
        <begin position="577"/>
        <end position="592"/>
    </location>
</feature>
<feature type="modified residue" description="Phosphothreonine; by autocatalysis" evidence="1">
    <location>
        <position position="173"/>
    </location>
</feature>
<proteinExistence type="inferred from homology"/>
<dbReference type="EMBL" id="CP000001">
    <property type="protein sequence ID" value="AAU16208.1"/>
    <property type="molecule type" value="Genomic_DNA"/>
</dbReference>
<dbReference type="RefSeq" id="WP_000034699.1">
    <property type="nucleotide sequence ID" value="NZ_CP009968.1"/>
</dbReference>
<dbReference type="SMR" id="Q634M7"/>
<dbReference type="GeneID" id="45024191"/>
<dbReference type="KEGG" id="bcz:BCE33L4061"/>
<dbReference type="PATRIC" id="fig|288681.22.peg.1329"/>
<dbReference type="Proteomes" id="UP000002612">
    <property type="component" value="Chromosome"/>
</dbReference>
<dbReference type="GO" id="GO:0005524">
    <property type="term" value="F:ATP binding"/>
    <property type="evidence" value="ECO:0007669"/>
    <property type="project" value="UniProtKB-UniRule"/>
</dbReference>
<dbReference type="GO" id="GO:0140662">
    <property type="term" value="F:ATP-dependent protein folding chaperone"/>
    <property type="evidence" value="ECO:0007669"/>
    <property type="project" value="InterPro"/>
</dbReference>
<dbReference type="GO" id="GO:0051082">
    <property type="term" value="F:unfolded protein binding"/>
    <property type="evidence" value="ECO:0007669"/>
    <property type="project" value="InterPro"/>
</dbReference>
<dbReference type="CDD" id="cd10234">
    <property type="entry name" value="ASKHA_NBD_HSP70_DnaK-like"/>
    <property type="match status" value="1"/>
</dbReference>
<dbReference type="FunFam" id="2.60.34.10:FF:000014">
    <property type="entry name" value="Chaperone protein DnaK HSP70"/>
    <property type="match status" value="1"/>
</dbReference>
<dbReference type="FunFam" id="1.20.1270.10:FF:000004">
    <property type="entry name" value="Molecular chaperone DnaK"/>
    <property type="match status" value="1"/>
</dbReference>
<dbReference type="FunFam" id="3.30.420.40:FF:000071">
    <property type="entry name" value="Molecular chaperone DnaK"/>
    <property type="match status" value="1"/>
</dbReference>
<dbReference type="FunFam" id="3.90.640.10:FF:000003">
    <property type="entry name" value="Molecular chaperone DnaK"/>
    <property type="match status" value="1"/>
</dbReference>
<dbReference type="Gene3D" id="1.20.1270.10">
    <property type="match status" value="1"/>
</dbReference>
<dbReference type="Gene3D" id="3.30.420.40">
    <property type="match status" value="2"/>
</dbReference>
<dbReference type="Gene3D" id="3.90.640.10">
    <property type="entry name" value="Actin, Chain A, domain 4"/>
    <property type="match status" value="1"/>
</dbReference>
<dbReference type="Gene3D" id="2.60.34.10">
    <property type="entry name" value="Substrate Binding Domain Of DNAk, Chain A, domain 1"/>
    <property type="match status" value="1"/>
</dbReference>
<dbReference type="HAMAP" id="MF_00332">
    <property type="entry name" value="DnaK"/>
    <property type="match status" value="1"/>
</dbReference>
<dbReference type="InterPro" id="IPR043129">
    <property type="entry name" value="ATPase_NBD"/>
</dbReference>
<dbReference type="InterPro" id="IPR012725">
    <property type="entry name" value="Chaperone_DnaK"/>
</dbReference>
<dbReference type="InterPro" id="IPR018181">
    <property type="entry name" value="Heat_shock_70_CS"/>
</dbReference>
<dbReference type="InterPro" id="IPR029048">
    <property type="entry name" value="HSP70_C_sf"/>
</dbReference>
<dbReference type="InterPro" id="IPR029047">
    <property type="entry name" value="HSP70_peptide-bd_sf"/>
</dbReference>
<dbReference type="InterPro" id="IPR013126">
    <property type="entry name" value="Hsp_70_fam"/>
</dbReference>
<dbReference type="NCBIfam" id="NF001413">
    <property type="entry name" value="PRK00290.1"/>
    <property type="match status" value="1"/>
</dbReference>
<dbReference type="NCBIfam" id="TIGR02350">
    <property type="entry name" value="prok_dnaK"/>
    <property type="match status" value="1"/>
</dbReference>
<dbReference type="PANTHER" id="PTHR19375">
    <property type="entry name" value="HEAT SHOCK PROTEIN 70KDA"/>
    <property type="match status" value="1"/>
</dbReference>
<dbReference type="Pfam" id="PF00012">
    <property type="entry name" value="HSP70"/>
    <property type="match status" value="1"/>
</dbReference>
<dbReference type="PRINTS" id="PR00301">
    <property type="entry name" value="HEATSHOCK70"/>
</dbReference>
<dbReference type="SUPFAM" id="SSF53067">
    <property type="entry name" value="Actin-like ATPase domain"/>
    <property type="match status" value="2"/>
</dbReference>
<dbReference type="SUPFAM" id="SSF100934">
    <property type="entry name" value="Heat shock protein 70kD (HSP70), C-terminal subdomain"/>
    <property type="match status" value="1"/>
</dbReference>
<dbReference type="SUPFAM" id="SSF100920">
    <property type="entry name" value="Heat shock protein 70kD (HSP70), peptide-binding domain"/>
    <property type="match status" value="1"/>
</dbReference>
<dbReference type="PROSITE" id="PS00297">
    <property type="entry name" value="HSP70_1"/>
    <property type="match status" value="1"/>
</dbReference>
<dbReference type="PROSITE" id="PS00329">
    <property type="entry name" value="HSP70_2"/>
    <property type="match status" value="1"/>
</dbReference>
<dbReference type="PROSITE" id="PS01036">
    <property type="entry name" value="HSP70_3"/>
    <property type="match status" value="1"/>
</dbReference>
<gene>
    <name evidence="1" type="primary">dnaK</name>
    <name type="ordered locus">BCE33L4061</name>
</gene>
<name>DNAK_BACCZ</name>
<reference key="1">
    <citation type="journal article" date="2006" name="J. Bacteriol.">
        <title>Pathogenomic sequence analysis of Bacillus cereus and Bacillus thuringiensis isolates closely related to Bacillus anthracis.</title>
        <authorList>
            <person name="Han C.S."/>
            <person name="Xie G."/>
            <person name="Challacombe J.F."/>
            <person name="Altherr M.R."/>
            <person name="Bhotika S.S."/>
            <person name="Bruce D."/>
            <person name="Campbell C.S."/>
            <person name="Campbell M.L."/>
            <person name="Chen J."/>
            <person name="Chertkov O."/>
            <person name="Cleland C."/>
            <person name="Dimitrijevic M."/>
            <person name="Doggett N.A."/>
            <person name="Fawcett J.J."/>
            <person name="Glavina T."/>
            <person name="Goodwin L.A."/>
            <person name="Hill K.K."/>
            <person name="Hitchcock P."/>
            <person name="Jackson P.J."/>
            <person name="Keim P."/>
            <person name="Kewalramani A.R."/>
            <person name="Longmire J."/>
            <person name="Lucas S."/>
            <person name="Malfatti S."/>
            <person name="McMurry K."/>
            <person name="Meincke L.J."/>
            <person name="Misra M."/>
            <person name="Moseman B.L."/>
            <person name="Mundt M."/>
            <person name="Munk A.C."/>
            <person name="Okinaka R.T."/>
            <person name="Parson-Quintana B."/>
            <person name="Reilly L.P."/>
            <person name="Richardson P."/>
            <person name="Robinson D.L."/>
            <person name="Rubin E."/>
            <person name="Saunders E."/>
            <person name="Tapia R."/>
            <person name="Tesmer J.G."/>
            <person name="Thayer N."/>
            <person name="Thompson L.S."/>
            <person name="Tice H."/>
            <person name="Ticknor L.O."/>
            <person name="Wills P.L."/>
            <person name="Brettin T.S."/>
            <person name="Gilna P."/>
        </authorList>
    </citation>
    <scope>NUCLEOTIDE SEQUENCE [LARGE SCALE GENOMIC DNA]</scope>
    <source>
        <strain>ZK / E33L</strain>
    </source>
</reference>
<accession>Q634M7</accession>
<keyword id="KW-0067">ATP-binding</keyword>
<keyword id="KW-0143">Chaperone</keyword>
<keyword id="KW-0547">Nucleotide-binding</keyword>
<keyword id="KW-0597">Phosphoprotein</keyword>
<keyword id="KW-0346">Stress response</keyword>
<sequence>MSKIIGIDLGTTNSCVAVMEGGEPKVIPNPEGNRTTPSVVAFKNEERQVGEVAKRQAITNPNTIMSVKRHMGTDYKVEVEGKDYTPQEISAIILQNLKASAEAYLGETVTKAVITVPAYFNDAERQATKDAGRIAGLEVERIINEPTAAALAYGLEKQDEEQKILVYDLGGGTFDVSILELADGTFEVISTAGDNRLGGDDFDQVIIDHLVAEFKKENNIDLSQDKMALQRLKDAAEKAKKDLSGVTQTQISLPFISAGAAGPLHLELTLTRAKFEELSAGLVERTLEPTRRALKDAGFAPSELDKVILVGGSTRIPAVQEAIKRETGKEPYKGVNPDEVVALGAAVQGGVLTGDVEGVLLLDVTPLSLGIETMGGVFTKLIERNTTIPTSKSQVFSTAADNQPAVDIHVLQGERPMSADNKTLGRFQLTDLPPAPRGIPQIEVTFDIDANGIVNVRAKDLGTSKEQAITIQSSSGLSDEEVERMVQEAEANADADQKRKEEVELRNEADQLVFQTDKVVKDLEGKVDAAEVAKATEAKEALQAAIEKNELEEIRAKKDALQEIVQQLTVKLYEQAQAAAGQAEGAEGAQDAGAKKDNVVDAEFEEVKEDK</sequence>
<comment type="function">
    <text evidence="1">Acts as a chaperone.</text>
</comment>
<comment type="induction">
    <text evidence="1">By stress conditions e.g. heat shock.</text>
</comment>
<comment type="similarity">
    <text evidence="1">Belongs to the heat shock protein 70 family.</text>
</comment>
<protein>
    <recommendedName>
        <fullName evidence="1">Chaperone protein DnaK</fullName>
    </recommendedName>
    <alternativeName>
        <fullName evidence="1">HSP70</fullName>
    </alternativeName>
    <alternativeName>
        <fullName evidence="1">Heat shock 70 kDa protein</fullName>
    </alternativeName>
    <alternativeName>
        <fullName evidence="1">Heat shock protein 70</fullName>
    </alternativeName>
</protein>
<organism>
    <name type="scientific">Bacillus cereus (strain ZK / E33L)</name>
    <dbReference type="NCBI Taxonomy" id="288681"/>
    <lineage>
        <taxon>Bacteria</taxon>
        <taxon>Bacillati</taxon>
        <taxon>Bacillota</taxon>
        <taxon>Bacilli</taxon>
        <taxon>Bacillales</taxon>
        <taxon>Bacillaceae</taxon>
        <taxon>Bacillus</taxon>
        <taxon>Bacillus cereus group</taxon>
    </lineage>
</organism>